<keyword id="KW-0007">Acetylation</keyword>
<keyword id="KW-0009">Actin-binding</keyword>
<keyword id="KW-0175">Coiled coil</keyword>
<keyword id="KW-0963">Cytoplasm</keyword>
<keyword id="KW-0968">Cytoplasmic vesicle</keyword>
<keyword id="KW-0206">Cytoskeleton</keyword>
<keyword id="KW-0903">Direct protein sequencing</keyword>
<keyword id="KW-0472">Membrane</keyword>
<keyword id="KW-0597">Phosphoprotein</keyword>
<keyword id="KW-1185">Reference proteome</keyword>
<keyword id="KW-0677">Repeat</keyword>
<keyword id="KW-0832">Ubl conjugation</keyword>
<keyword id="KW-0853">WD repeat</keyword>
<proteinExistence type="evidence at protein level"/>
<dbReference type="EMBL" id="D44496">
    <property type="protein sequence ID" value="BAA07939.1"/>
    <property type="molecule type" value="mRNA"/>
</dbReference>
<dbReference type="EMBL" id="BT025463">
    <property type="protein sequence ID" value="ABF57419.1"/>
    <property type="molecule type" value="mRNA"/>
</dbReference>
<dbReference type="EMBL" id="BC102876">
    <property type="protein sequence ID" value="AAI02877.1"/>
    <property type="molecule type" value="mRNA"/>
</dbReference>
<dbReference type="PIR" id="S65666">
    <property type="entry name" value="S65666"/>
</dbReference>
<dbReference type="RefSeq" id="NP_776946.1">
    <property type="nucleotide sequence ID" value="NM_174521.2"/>
</dbReference>
<dbReference type="RefSeq" id="XP_005224888.1">
    <property type="nucleotide sequence ID" value="XM_005224831.5"/>
</dbReference>
<dbReference type="RefSeq" id="XP_005224890.1">
    <property type="nucleotide sequence ID" value="XM_005224833.5"/>
</dbReference>
<dbReference type="SMR" id="Q92176"/>
<dbReference type="FunCoup" id="Q92176">
    <property type="interactions" value="1248"/>
</dbReference>
<dbReference type="STRING" id="9913.ENSBTAP00000011382"/>
<dbReference type="PaxDb" id="9913-ENSBTAP00000051462"/>
<dbReference type="PeptideAtlas" id="Q92176"/>
<dbReference type="Ensembl" id="ENSBTAT00000051969.2">
    <property type="protein sequence ID" value="ENSBTAP00000051462.1"/>
    <property type="gene ID" value="ENSBTAG00000008631.7"/>
</dbReference>
<dbReference type="GeneID" id="282196"/>
<dbReference type="KEGG" id="bta:282196"/>
<dbReference type="CTD" id="11151"/>
<dbReference type="VEuPathDB" id="HostDB:ENSBTAG00000008631"/>
<dbReference type="VGNC" id="VGNC:27620">
    <property type="gene designation" value="CORO1A"/>
</dbReference>
<dbReference type="eggNOG" id="KOG0303">
    <property type="taxonomic scope" value="Eukaryota"/>
</dbReference>
<dbReference type="GeneTree" id="ENSGT00940000160628"/>
<dbReference type="HOGENOM" id="CLU_026859_0_1_1"/>
<dbReference type="InParanoid" id="Q92176"/>
<dbReference type="OMA" id="MVMVWEI"/>
<dbReference type="OrthoDB" id="1850764at2759"/>
<dbReference type="TreeFam" id="TF314280"/>
<dbReference type="Proteomes" id="UP000009136">
    <property type="component" value="Chromosome 25"/>
</dbReference>
<dbReference type="Bgee" id="ENSBTAG00000008631">
    <property type="expression patterns" value="Expressed in blood and 103 other cell types or tissues"/>
</dbReference>
<dbReference type="GO" id="GO:0005884">
    <property type="term" value="C:actin filament"/>
    <property type="evidence" value="ECO:0007669"/>
    <property type="project" value="Ensembl"/>
</dbReference>
<dbReference type="GO" id="GO:0030424">
    <property type="term" value="C:axon"/>
    <property type="evidence" value="ECO:0007669"/>
    <property type="project" value="Ensembl"/>
</dbReference>
<dbReference type="GO" id="GO:0005911">
    <property type="term" value="C:cell-cell junction"/>
    <property type="evidence" value="ECO:0007669"/>
    <property type="project" value="Ensembl"/>
</dbReference>
<dbReference type="GO" id="GO:0030864">
    <property type="term" value="C:cortical actin cytoskeleton"/>
    <property type="evidence" value="ECO:0007669"/>
    <property type="project" value="Ensembl"/>
</dbReference>
<dbReference type="GO" id="GO:0005769">
    <property type="term" value="C:early endosome"/>
    <property type="evidence" value="ECO:0007669"/>
    <property type="project" value="Ensembl"/>
</dbReference>
<dbReference type="GO" id="GO:0098978">
    <property type="term" value="C:glutamatergic synapse"/>
    <property type="evidence" value="ECO:0007669"/>
    <property type="project" value="Ensembl"/>
</dbReference>
<dbReference type="GO" id="GO:0001772">
    <property type="term" value="C:immunological synapse"/>
    <property type="evidence" value="ECO:0007669"/>
    <property type="project" value="Ensembl"/>
</dbReference>
<dbReference type="GO" id="GO:0030027">
    <property type="term" value="C:lamellipodium"/>
    <property type="evidence" value="ECO:0007669"/>
    <property type="project" value="Ensembl"/>
</dbReference>
<dbReference type="GO" id="GO:0001891">
    <property type="term" value="C:phagocytic cup"/>
    <property type="evidence" value="ECO:0007669"/>
    <property type="project" value="Ensembl"/>
</dbReference>
<dbReference type="GO" id="GO:0030670">
    <property type="term" value="C:phagocytic vesicle membrane"/>
    <property type="evidence" value="ECO:0007669"/>
    <property type="project" value="UniProtKB-SubCell"/>
</dbReference>
<dbReference type="GO" id="GO:0032991">
    <property type="term" value="C:protein-containing complex"/>
    <property type="evidence" value="ECO:0007669"/>
    <property type="project" value="Ensembl"/>
</dbReference>
<dbReference type="GO" id="GO:0051015">
    <property type="term" value="F:actin filament binding"/>
    <property type="evidence" value="ECO:0000318"/>
    <property type="project" value="GO_Central"/>
</dbReference>
<dbReference type="GO" id="GO:0003785">
    <property type="term" value="F:actin monomer binding"/>
    <property type="evidence" value="ECO:0007669"/>
    <property type="project" value="Ensembl"/>
</dbReference>
<dbReference type="GO" id="GO:0032036">
    <property type="term" value="F:myosin heavy chain binding"/>
    <property type="evidence" value="ECO:0007669"/>
    <property type="project" value="Ensembl"/>
</dbReference>
<dbReference type="GO" id="GO:0043548">
    <property type="term" value="F:phosphatidylinositol 3-kinase binding"/>
    <property type="evidence" value="ECO:0007669"/>
    <property type="project" value="Ensembl"/>
</dbReference>
<dbReference type="GO" id="GO:0042803">
    <property type="term" value="F:protein homodimerization activity"/>
    <property type="evidence" value="ECO:0007669"/>
    <property type="project" value="Ensembl"/>
</dbReference>
<dbReference type="GO" id="GO:0007015">
    <property type="term" value="P:actin filament organization"/>
    <property type="evidence" value="ECO:0000318"/>
    <property type="project" value="GO_Central"/>
</dbReference>
<dbReference type="GO" id="GO:0006816">
    <property type="term" value="P:calcium ion transport"/>
    <property type="evidence" value="ECO:0007669"/>
    <property type="project" value="Ensembl"/>
</dbReference>
<dbReference type="GO" id="GO:0016477">
    <property type="term" value="P:cell migration"/>
    <property type="evidence" value="ECO:0000318"/>
    <property type="project" value="GO_Central"/>
</dbReference>
<dbReference type="GO" id="GO:0031589">
    <property type="term" value="P:cell-substrate adhesion"/>
    <property type="evidence" value="ECO:0007669"/>
    <property type="project" value="Ensembl"/>
</dbReference>
<dbReference type="GO" id="GO:0071353">
    <property type="term" value="P:cellular response to interleukin-4"/>
    <property type="evidence" value="ECO:0007669"/>
    <property type="project" value="Ensembl"/>
</dbReference>
<dbReference type="GO" id="GO:0061502">
    <property type="term" value="P:early endosome to recycling endosome transport"/>
    <property type="evidence" value="ECO:0007669"/>
    <property type="project" value="Ensembl"/>
</dbReference>
<dbReference type="GO" id="GO:0010631">
    <property type="term" value="P:epithelial cell migration"/>
    <property type="evidence" value="ECO:0007669"/>
    <property type="project" value="Ensembl"/>
</dbReference>
<dbReference type="GO" id="GO:0048873">
    <property type="term" value="P:homeostasis of number of cells within a tissue"/>
    <property type="evidence" value="ECO:0007669"/>
    <property type="project" value="Ensembl"/>
</dbReference>
<dbReference type="GO" id="GO:0030595">
    <property type="term" value="P:leukocyte chemotaxis"/>
    <property type="evidence" value="ECO:0007669"/>
    <property type="project" value="Ensembl"/>
</dbReference>
<dbReference type="GO" id="GO:0043320">
    <property type="term" value="P:natural killer cell degranulation"/>
    <property type="evidence" value="ECO:0007669"/>
    <property type="project" value="Ensembl"/>
</dbReference>
<dbReference type="GO" id="GO:0051126">
    <property type="term" value="P:negative regulation of actin nucleation"/>
    <property type="evidence" value="ECO:0007669"/>
    <property type="project" value="Ensembl"/>
</dbReference>
<dbReference type="GO" id="GO:0043524">
    <property type="term" value="P:negative regulation of neuron apoptotic process"/>
    <property type="evidence" value="ECO:0007669"/>
    <property type="project" value="Ensembl"/>
</dbReference>
<dbReference type="GO" id="GO:0031339">
    <property type="term" value="P:negative regulation of vesicle fusion"/>
    <property type="evidence" value="ECO:0007669"/>
    <property type="project" value="Ensembl"/>
</dbReference>
<dbReference type="GO" id="GO:0038180">
    <property type="term" value="P:nerve growth factor signaling pathway"/>
    <property type="evidence" value="ECO:0007669"/>
    <property type="project" value="Ensembl"/>
</dbReference>
<dbReference type="GO" id="GO:0051402">
    <property type="term" value="P:neuron apoptotic process"/>
    <property type="evidence" value="ECO:0007669"/>
    <property type="project" value="Ensembl"/>
</dbReference>
<dbReference type="GO" id="GO:0001845">
    <property type="term" value="P:phagolysosome assembly"/>
    <property type="evidence" value="ECO:0007669"/>
    <property type="project" value="Ensembl"/>
</dbReference>
<dbReference type="GO" id="GO:0050918">
    <property type="term" value="P:positive chemotaxis"/>
    <property type="evidence" value="ECO:0007669"/>
    <property type="project" value="Ensembl"/>
</dbReference>
<dbReference type="GO" id="GO:2000406">
    <property type="term" value="P:positive regulation of T cell migration"/>
    <property type="evidence" value="ECO:0007669"/>
    <property type="project" value="Ensembl"/>
</dbReference>
<dbReference type="GO" id="GO:0042102">
    <property type="term" value="P:positive regulation of T cell proliferation"/>
    <property type="evidence" value="ECO:0007669"/>
    <property type="project" value="Ensembl"/>
</dbReference>
<dbReference type="GO" id="GO:0030833">
    <property type="term" value="P:regulation of actin filament polymerization"/>
    <property type="evidence" value="ECO:0007669"/>
    <property type="project" value="Ensembl"/>
</dbReference>
<dbReference type="GO" id="GO:0008360">
    <property type="term" value="P:regulation of cell shape"/>
    <property type="evidence" value="ECO:0007669"/>
    <property type="project" value="Ensembl"/>
</dbReference>
<dbReference type="GO" id="GO:0051279">
    <property type="term" value="P:regulation of release of sequestered calcium ion into cytosol"/>
    <property type="evidence" value="ECO:0007669"/>
    <property type="project" value="Ensembl"/>
</dbReference>
<dbReference type="GO" id="GO:0043029">
    <property type="term" value="P:T cell homeostasis"/>
    <property type="evidence" value="ECO:0007669"/>
    <property type="project" value="Ensembl"/>
</dbReference>
<dbReference type="GO" id="GO:0042098">
    <property type="term" value="P:T cell proliferation"/>
    <property type="evidence" value="ECO:0007669"/>
    <property type="project" value="Ensembl"/>
</dbReference>
<dbReference type="GO" id="GO:0072679">
    <property type="term" value="P:thymocyte migration"/>
    <property type="evidence" value="ECO:0007669"/>
    <property type="project" value="Ensembl"/>
</dbReference>
<dbReference type="GO" id="GO:0032796">
    <property type="term" value="P:uropod organization"/>
    <property type="evidence" value="ECO:0007669"/>
    <property type="project" value="Ensembl"/>
</dbReference>
<dbReference type="GO" id="GO:0006906">
    <property type="term" value="P:vesicle fusion"/>
    <property type="evidence" value="ECO:0007669"/>
    <property type="project" value="Ensembl"/>
</dbReference>
<dbReference type="CDD" id="cd14686">
    <property type="entry name" value="bZIP"/>
    <property type="match status" value="1"/>
</dbReference>
<dbReference type="FunFam" id="2.130.10.10:FF:000003">
    <property type="entry name" value="Coronin"/>
    <property type="match status" value="1"/>
</dbReference>
<dbReference type="Gene3D" id="2.130.10.10">
    <property type="entry name" value="YVTN repeat-like/Quinoprotein amine dehydrogenase"/>
    <property type="match status" value="1"/>
</dbReference>
<dbReference type="InterPro" id="IPR015505">
    <property type="entry name" value="Coronin"/>
</dbReference>
<dbReference type="InterPro" id="IPR015048">
    <property type="entry name" value="DUF1899"/>
</dbReference>
<dbReference type="InterPro" id="IPR015049">
    <property type="entry name" value="Trimer_CC"/>
</dbReference>
<dbReference type="InterPro" id="IPR015943">
    <property type="entry name" value="WD40/YVTN_repeat-like_dom_sf"/>
</dbReference>
<dbReference type="InterPro" id="IPR019775">
    <property type="entry name" value="WD40_repeat_CS"/>
</dbReference>
<dbReference type="InterPro" id="IPR036322">
    <property type="entry name" value="WD40_repeat_dom_sf"/>
</dbReference>
<dbReference type="InterPro" id="IPR001680">
    <property type="entry name" value="WD40_rpt"/>
</dbReference>
<dbReference type="PANTHER" id="PTHR10856">
    <property type="entry name" value="CORONIN"/>
    <property type="match status" value="1"/>
</dbReference>
<dbReference type="PANTHER" id="PTHR10856:SF18">
    <property type="entry name" value="CORONIN-1A"/>
    <property type="match status" value="1"/>
</dbReference>
<dbReference type="Pfam" id="PF08953">
    <property type="entry name" value="DUF1899"/>
    <property type="match status" value="1"/>
</dbReference>
<dbReference type="Pfam" id="PF08954">
    <property type="entry name" value="Trimer_CC"/>
    <property type="match status" value="1"/>
</dbReference>
<dbReference type="Pfam" id="PF00400">
    <property type="entry name" value="WD40"/>
    <property type="match status" value="3"/>
</dbReference>
<dbReference type="Pfam" id="PF16300">
    <property type="entry name" value="WD40_4"/>
    <property type="match status" value="1"/>
</dbReference>
<dbReference type="SMART" id="SM01166">
    <property type="entry name" value="DUF1899"/>
    <property type="match status" value="1"/>
</dbReference>
<dbReference type="SMART" id="SM01167">
    <property type="entry name" value="DUF1900"/>
    <property type="match status" value="1"/>
</dbReference>
<dbReference type="SMART" id="SM00320">
    <property type="entry name" value="WD40"/>
    <property type="match status" value="3"/>
</dbReference>
<dbReference type="SUPFAM" id="SSF50978">
    <property type="entry name" value="WD40 repeat-like"/>
    <property type="match status" value="1"/>
</dbReference>
<dbReference type="PROSITE" id="PS00678">
    <property type="entry name" value="WD_REPEATS_1"/>
    <property type="match status" value="2"/>
</dbReference>
<dbReference type="PROSITE" id="PS50082">
    <property type="entry name" value="WD_REPEATS_2"/>
    <property type="match status" value="2"/>
</dbReference>
<dbReference type="PROSITE" id="PS50294">
    <property type="entry name" value="WD_REPEATS_REGION"/>
    <property type="match status" value="1"/>
</dbReference>
<feature type="initiator methionine" description="Removed" evidence="3">
    <location>
        <position position="1"/>
    </location>
</feature>
<feature type="chain" id="PRO_0000050919" description="Coronin-1A">
    <location>
        <begin position="2"/>
        <end position="461"/>
    </location>
</feature>
<feature type="repeat" description="WD 1">
    <location>
        <begin position="13"/>
        <end position="63"/>
    </location>
</feature>
<feature type="repeat" description="WD 2">
    <location>
        <begin position="73"/>
        <end position="110"/>
    </location>
</feature>
<feature type="repeat" description="WD 3">
    <location>
        <begin position="123"/>
        <end position="160"/>
    </location>
</feature>
<feature type="repeat" description="WD 4">
    <location>
        <begin position="164"/>
        <end position="204"/>
    </location>
</feature>
<feature type="repeat" description="WD 5">
    <location>
        <begin position="207"/>
        <end position="251"/>
    </location>
</feature>
<feature type="repeat" description="WD 6">
    <location>
        <begin position="258"/>
        <end position="296"/>
    </location>
</feature>
<feature type="repeat" description="WD 7">
    <location>
        <begin position="302"/>
        <end position="349"/>
    </location>
</feature>
<feature type="region of interest" description="Disordered" evidence="5">
    <location>
        <begin position="404"/>
        <end position="429"/>
    </location>
</feature>
<feature type="coiled-coil region" evidence="4">
    <location>
        <begin position="424"/>
        <end position="460"/>
    </location>
</feature>
<feature type="compositionally biased region" description="Basic and acidic residues" evidence="5">
    <location>
        <begin position="404"/>
        <end position="418"/>
    </location>
</feature>
<feature type="modified residue" description="N-acetylserine" evidence="3">
    <location>
        <position position="2"/>
    </location>
</feature>
<feature type="modified residue" description="Phosphoserine; by PKC" evidence="3">
    <location>
        <position position="2"/>
    </location>
</feature>
<feature type="modified residue" description="Phosphothreonine; by PKC" evidence="3">
    <location>
        <position position="412"/>
    </location>
</feature>
<feature type="modified residue" description="Phosphothreonine" evidence="2">
    <location>
        <position position="418"/>
    </location>
</feature>
<feature type="modified residue" description="Phosphoserine" evidence="2">
    <location>
        <position position="422"/>
    </location>
</feature>
<feature type="modified residue" description="N6-acetyllysine" evidence="3">
    <location>
        <position position="449"/>
    </location>
</feature>
<comment type="function">
    <text evidence="1">May be a crucial component of the cytoskeleton of highly motile cells, functioning both in the invagination of large pieces of plasma membrane, as well as in forming protrusions of the plasma membrane involved in cell locomotion. In mycobacteria-infected macrophages, its retention on the phagosomal membrane prevents fusion between phagosomes and lysosomes (By similarity).</text>
</comment>
<comment type="subunit">
    <text>Binds actin.</text>
</comment>
<comment type="subcellular location">
    <subcellularLocation>
        <location evidence="1">Cytoplasm</location>
        <location evidence="1">Cytoskeleton</location>
    </subcellularLocation>
    <subcellularLocation>
        <location evidence="1">Cytoplasm</location>
        <location evidence="1">Cell cortex</location>
    </subcellularLocation>
    <subcellularLocation>
        <location evidence="1">Cytoplasmic vesicle</location>
        <location evidence="1">Phagosome membrane</location>
    </subcellularLocation>
    <text evidence="1">In non-infected macrophages, associated with the cortical microtubule network. In mycobacteria-infected macrophages, becomes progressively relocalized and retained around the mycobacterial phagosomes. Retention on the phagosomal membrane is strictly dependent on mycobacterial viability and not due to impaired acidification (By similarity).</text>
</comment>
<comment type="tissue specificity">
    <text>Expressed in brain, thymus, spleen, bone marrow and lymph node. Low in lung and gut.</text>
</comment>
<comment type="PTM">
    <text evidence="1">phosphorylation at Thr-412 by PKC strongly down-regulates the association with actin.</text>
</comment>
<comment type="PTM">
    <text evidence="1">Polyubiquitinated by RNF128 with 'Lys-48'-linked chains, leading to proteasomal degradation.</text>
</comment>
<comment type="similarity">
    <text evidence="6">Belongs to the WD repeat coronin family.</text>
</comment>
<accession>Q92176</accession>
<accession>Q3SZF9</accession>
<protein>
    <recommendedName>
        <fullName>Coronin-1A</fullName>
    </recommendedName>
    <alternativeName>
        <fullName>Coronin-like protein A</fullName>
        <shortName>Clipin-A</shortName>
    </alternativeName>
    <alternativeName>
        <fullName>Coronin-like protein p57</fullName>
    </alternativeName>
    <alternativeName>
        <fullName>Tryptophan aspartate-containing coat protein</fullName>
        <shortName>TACO</shortName>
    </alternativeName>
</protein>
<gene>
    <name type="primary">CORO1A</name>
    <name type="synonym">CORO1</name>
</gene>
<name>COR1A_BOVIN</name>
<reference key="1">
    <citation type="journal article" date="1995" name="FEBS Lett.">
        <title>Molecular cloning of a novel actin-binding protein, p57, with a WD repeat and a leucine zipper motif.</title>
        <authorList>
            <person name="Suzuki K."/>
            <person name="Nishihata J."/>
            <person name="Arai Y."/>
            <person name="Honma N."/>
            <person name="Yamamoto K."/>
            <person name="Irimura T."/>
            <person name="Toyoshima S."/>
        </authorList>
    </citation>
    <scope>NUCLEOTIDE SEQUENCE [MRNA]</scope>
    <scope>PARTIAL PROTEIN SEQUENCE</scope>
    <source>
        <tissue>Spleen</tissue>
    </source>
</reference>
<reference key="2">
    <citation type="journal article" date="2005" name="BMC Genomics">
        <title>Characterization of 954 bovine full-CDS cDNA sequences.</title>
        <authorList>
            <person name="Harhay G.P."/>
            <person name="Sonstegard T.S."/>
            <person name="Keele J.W."/>
            <person name="Heaton M.P."/>
            <person name="Clawson M.L."/>
            <person name="Snelling W.M."/>
            <person name="Wiedmann R.T."/>
            <person name="Van Tassell C.P."/>
            <person name="Smith T.P.L."/>
        </authorList>
    </citation>
    <scope>NUCLEOTIDE SEQUENCE [LARGE SCALE MRNA]</scope>
</reference>
<reference key="3">
    <citation type="submission" date="2005-08" db="EMBL/GenBank/DDBJ databases">
        <authorList>
            <consortium name="NIH - Mammalian Gene Collection (MGC) project"/>
        </authorList>
    </citation>
    <scope>NUCLEOTIDE SEQUENCE [LARGE SCALE MRNA]</scope>
    <source>
        <strain>Crossbred X Angus</strain>
        <tissue>Ileum</tissue>
    </source>
</reference>
<sequence length="461" mass="50979">MSRQVVRSSKFRHVFGQPAKADQCYEDVRVSQNTWDSGFCAVNPKFVALICEASGGGAFLVLPLGKTGRVDKNVPMVCGHTAPVLDIAWCPHNDNVIASGSEDCSVMVWEIPDGGLTLPLREPVVTLEGHTKRVGIVAWHPTAQNVLLSAGCDNVILVWDVGTGVAVLTLGSDVHPDTIYSVDWSRDGALICTSCRDKRVRIIEPRKGTIVAEKDRPHEGTRPVRAVFVSDGKILTTGFSRMSERQVALWDTKHLEEPLSLQELDTSSGVLLPFFDPDTNIVYLCGKGDSSIRYFEITSEAPFLHYLSMFSSKESQRGMGYMPKRGLEVNKCEIARFYKLHERKCEPIAMTVPRKSDLFQEDLYPPTAGPDAALTAEEWLGGRDAGPLLISLKDGYVPPKSRELRVNRGLDTGRKRTTPEASGAPSSDAISRLEEEMRKLQATVQELQKRLDRLEETVQAK</sequence>
<evidence type="ECO:0000250" key="1"/>
<evidence type="ECO:0000250" key="2">
    <source>
        <dbReference type="UniProtKB" id="O89053"/>
    </source>
</evidence>
<evidence type="ECO:0000250" key="3">
    <source>
        <dbReference type="UniProtKB" id="P31146"/>
    </source>
</evidence>
<evidence type="ECO:0000255" key="4"/>
<evidence type="ECO:0000256" key="5">
    <source>
        <dbReference type="SAM" id="MobiDB-lite"/>
    </source>
</evidence>
<evidence type="ECO:0000305" key="6"/>
<organism>
    <name type="scientific">Bos taurus</name>
    <name type="common">Bovine</name>
    <dbReference type="NCBI Taxonomy" id="9913"/>
    <lineage>
        <taxon>Eukaryota</taxon>
        <taxon>Metazoa</taxon>
        <taxon>Chordata</taxon>
        <taxon>Craniata</taxon>
        <taxon>Vertebrata</taxon>
        <taxon>Euteleostomi</taxon>
        <taxon>Mammalia</taxon>
        <taxon>Eutheria</taxon>
        <taxon>Laurasiatheria</taxon>
        <taxon>Artiodactyla</taxon>
        <taxon>Ruminantia</taxon>
        <taxon>Pecora</taxon>
        <taxon>Bovidae</taxon>
        <taxon>Bovinae</taxon>
        <taxon>Bos</taxon>
    </lineage>
</organism>